<protein>
    <recommendedName>
        <fullName evidence="1">Ribosomal RNA small subunit methyltransferase H</fullName>
        <ecNumber evidence="1">2.1.1.199</ecNumber>
    </recommendedName>
    <alternativeName>
        <fullName evidence="1">16S rRNA m(4)C1402 methyltransferase</fullName>
    </alternativeName>
    <alternativeName>
        <fullName evidence="1">rRNA (cytosine-N(4)-)-methyltransferase RsmH</fullName>
    </alternativeName>
</protein>
<name>RSMH_BRUA1</name>
<comment type="function">
    <text evidence="1">Specifically methylates the N4 position of cytidine in position 1402 (C1402) of 16S rRNA.</text>
</comment>
<comment type="catalytic activity">
    <reaction evidence="1">
        <text>cytidine(1402) in 16S rRNA + S-adenosyl-L-methionine = N(4)-methylcytidine(1402) in 16S rRNA + S-adenosyl-L-homocysteine + H(+)</text>
        <dbReference type="Rhea" id="RHEA:42928"/>
        <dbReference type="Rhea" id="RHEA-COMP:10286"/>
        <dbReference type="Rhea" id="RHEA-COMP:10287"/>
        <dbReference type="ChEBI" id="CHEBI:15378"/>
        <dbReference type="ChEBI" id="CHEBI:57856"/>
        <dbReference type="ChEBI" id="CHEBI:59789"/>
        <dbReference type="ChEBI" id="CHEBI:74506"/>
        <dbReference type="ChEBI" id="CHEBI:82748"/>
        <dbReference type="EC" id="2.1.1.199"/>
    </reaction>
</comment>
<comment type="subcellular location">
    <subcellularLocation>
        <location evidence="1">Cytoplasm</location>
    </subcellularLocation>
</comment>
<comment type="similarity">
    <text evidence="1">Belongs to the methyltransferase superfamily. RsmH family.</text>
</comment>
<organism>
    <name type="scientific">Brucella abortus (strain S19)</name>
    <dbReference type="NCBI Taxonomy" id="430066"/>
    <lineage>
        <taxon>Bacteria</taxon>
        <taxon>Pseudomonadati</taxon>
        <taxon>Pseudomonadota</taxon>
        <taxon>Alphaproteobacteria</taxon>
        <taxon>Hyphomicrobiales</taxon>
        <taxon>Brucellaceae</taxon>
        <taxon>Brucella/Ochrobactrum group</taxon>
        <taxon>Brucella</taxon>
    </lineage>
</organism>
<reference key="1">
    <citation type="journal article" date="2008" name="PLoS ONE">
        <title>Genome sequence of Brucella abortus vaccine strain S19 compared to virulent strains yields candidate virulence genes.</title>
        <authorList>
            <person name="Crasta O.R."/>
            <person name="Folkerts O."/>
            <person name="Fei Z."/>
            <person name="Mane S.P."/>
            <person name="Evans C."/>
            <person name="Martino-Catt S."/>
            <person name="Bricker B."/>
            <person name="Yu G."/>
            <person name="Du L."/>
            <person name="Sobral B.W."/>
        </authorList>
    </citation>
    <scope>NUCLEOTIDE SEQUENCE [LARGE SCALE GENOMIC DNA]</scope>
    <source>
        <strain>S19</strain>
    </source>
</reference>
<gene>
    <name evidence="1" type="primary">rsmH</name>
    <name type="synonym">mraW</name>
    <name type="ordered locus">BAbS19_I13640</name>
</gene>
<proteinExistence type="inferred from homology"/>
<feature type="chain" id="PRO_0000386761" description="Ribosomal RNA small subunit methyltransferase H">
    <location>
        <begin position="1"/>
        <end position="346"/>
    </location>
</feature>
<feature type="region of interest" description="Disordered" evidence="2">
    <location>
        <begin position="270"/>
        <end position="346"/>
    </location>
</feature>
<feature type="binding site" evidence="1">
    <location>
        <begin position="46"/>
        <end position="48"/>
    </location>
    <ligand>
        <name>S-adenosyl-L-methionine</name>
        <dbReference type="ChEBI" id="CHEBI:59789"/>
    </ligand>
</feature>
<feature type="binding site" evidence="1">
    <location>
        <position position="63"/>
    </location>
    <ligand>
        <name>S-adenosyl-L-methionine</name>
        <dbReference type="ChEBI" id="CHEBI:59789"/>
    </ligand>
</feature>
<feature type="binding site" evidence="1">
    <location>
        <position position="90"/>
    </location>
    <ligand>
        <name>S-adenosyl-L-methionine</name>
        <dbReference type="ChEBI" id="CHEBI:59789"/>
    </ligand>
</feature>
<feature type="binding site" evidence="1">
    <location>
        <position position="113"/>
    </location>
    <ligand>
        <name>S-adenosyl-L-methionine</name>
        <dbReference type="ChEBI" id="CHEBI:59789"/>
    </ligand>
</feature>
<feature type="binding site" evidence="1">
    <location>
        <position position="120"/>
    </location>
    <ligand>
        <name>S-adenosyl-L-methionine</name>
        <dbReference type="ChEBI" id="CHEBI:59789"/>
    </ligand>
</feature>
<keyword id="KW-0963">Cytoplasm</keyword>
<keyword id="KW-0489">Methyltransferase</keyword>
<keyword id="KW-0698">rRNA processing</keyword>
<keyword id="KW-0949">S-adenosyl-L-methionine</keyword>
<keyword id="KW-0808">Transferase</keyword>
<accession>B2S6R2</accession>
<dbReference type="EC" id="2.1.1.199" evidence="1"/>
<dbReference type="EMBL" id="CP000887">
    <property type="protein sequence ID" value="ACD72859.1"/>
    <property type="molecule type" value="Genomic_DNA"/>
</dbReference>
<dbReference type="SMR" id="B2S6R2"/>
<dbReference type="KEGG" id="bmc:BAbS19_I13640"/>
<dbReference type="HOGENOM" id="CLU_038422_1_1_5"/>
<dbReference type="Proteomes" id="UP000002565">
    <property type="component" value="Chromosome 1"/>
</dbReference>
<dbReference type="GO" id="GO:0005737">
    <property type="term" value="C:cytoplasm"/>
    <property type="evidence" value="ECO:0007669"/>
    <property type="project" value="UniProtKB-SubCell"/>
</dbReference>
<dbReference type="GO" id="GO:0071424">
    <property type="term" value="F:rRNA (cytosine-N4-)-methyltransferase activity"/>
    <property type="evidence" value="ECO:0007669"/>
    <property type="project" value="UniProtKB-UniRule"/>
</dbReference>
<dbReference type="GO" id="GO:0070475">
    <property type="term" value="P:rRNA base methylation"/>
    <property type="evidence" value="ECO:0007669"/>
    <property type="project" value="UniProtKB-UniRule"/>
</dbReference>
<dbReference type="CDD" id="cd02440">
    <property type="entry name" value="AdoMet_MTases"/>
    <property type="match status" value="1"/>
</dbReference>
<dbReference type="Gene3D" id="1.10.150.170">
    <property type="entry name" value="Putative methyltransferase TM0872, insert domain"/>
    <property type="match status" value="1"/>
</dbReference>
<dbReference type="Gene3D" id="3.40.50.150">
    <property type="entry name" value="Vaccinia Virus protein VP39"/>
    <property type="match status" value="1"/>
</dbReference>
<dbReference type="HAMAP" id="MF_01007">
    <property type="entry name" value="16SrRNA_methyltr_H"/>
    <property type="match status" value="1"/>
</dbReference>
<dbReference type="InterPro" id="IPR002903">
    <property type="entry name" value="RsmH"/>
</dbReference>
<dbReference type="InterPro" id="IPR023397">
    <property type="entry name" value="SAM-dep_MeTrfase_MraW_recog"/>
</dbReference>
<dbReference type="InterPro" id="IPR029063">
    <property type="entry name" value="SAM-dependent_MTases_sf"/>
</dbReference>
<dbReference type="NCBIfam" id="TIGR00006">
    <property type="entry name" value="16S rRNA (cytosine(1402)-N(4))-methyltransferase RsmH"/>
    <property type="match status" value="1"/>
</dbReference>
<dbReference type="PANTHER" id="PTHR11265:SF0">
    <property type="entry name" value="12S RRNA N4-METHYLCYTIDINE METHYLTRANSFERASE"/>
    <property type="match status" value="1"/>
</dbReference>
<dbReference type="PANTHER" id="PTHR11265">
    <property type="entry name" value="S-ADENOSYL-METHYLTRANSFERASE MRAW"/>
    <property type="match status" value="1"/>
</dbReference>
<dbReference type="Pfam" id="PF01795">
    <property type="entry name" value="Methyltransf_5"/>
    <property type="match status" value="1"/>
</dbReference>
<dbReference type="PIRSF" id="PIRSF004486">
    <property type="entry name" value="MraW"/>
    <property type="match status" value="1"/>
</dbReference>
<dbReference type="SUPFAM" id="SSF81799">
    <property type="entry name" value="Putative methyltransferase TM0872, insert domain"/>
    <property type="match status" value="1"/>
</dbReference>
<dbReference type="SUPFAM" id="SSF53335">
    <property type="entry name" value="S-adenosyl-L-methionine-dependent methyltransferases"/>
    <property type="match status" value="1"/>
</dbReference>
<sequence>MASLGGDNSQAEGAEVRHVPVLIAEVIDALKPAPGAVIVDGTFGAGGYTRRILETGADVIAIDRDPTAIEAGRAMEKEFPGRLNLVESRFSALDEAVARMSGAGKKVDGVVLDIGVSSMQIDEAERGFSFQKDGPLDMRMSSRGPSAADAVNRLKTGDLARIFNFLGEERHAGRIARMIEKRRAAKPFTRTLDLANAIETLVGRNPKDRIHPATRVFQALRVYVNDELGELARALLAAERILKPGGRLVVVTFHSLEDRMVKRFFADRAGGSAGSRHMPETHMRLPSFTPAVKGAVGPTPEEEERNPRARSAKLRAGIRTENPPLEDDLSLFGLPKLPETNELARS</sequence>
<evidence type="ECO:0000255" key="1">
    <source>
        <dbReference type="HAMAP-Rule" id="MF_01007"/>
    </source>
</evidence>
<evidence type="ECO:0000256" key="2">
    <source>
        <dbReference type="SAM" id="MobiDB-lite"/>
    </source>
</evidence>